<name>TAL_HYDS0</name>
<reference key="1">
    <citation type="journal article" date="2009" name="J. Bacteriol.">
        <title>Complete and draft genome sequences of six members of the Aquificales.</title>
        <authorList>
            <person name="Reysenbach A.-L."/>
            <person name="Hamamura N."/>
            <person name="Podar M."/>
            <person name="Griffiths E."/>
            <person name="Ferreira S."/>
            <person name="Hochstein R."/>
            <person name="Heidelberg J."/>
            <person name="Johnson J."/>
            <person name="Mead D."/>
            <person name="Pohorille A."/>
            <person name="Sarmiento M."/>
            <person name="Schweighofer K."/>
            <person name="Seshadri R."/>
            <person name="Voytek M.A."/>
        </authorList>
    </citation>
    <scope>NUCLEOTIDE SEQUENCE [LARGE SCALE GENOMIC DNA]</scope>
    <source>
        <strain>Y04AAS1</strain>
    </source>
</reference>
<organism>
    <name type="scientific">Hydrogenobaculum sp. (strain Y04AAS1)</name>
    <dbReference type="NCBI Taxonomy" id="380749"/>
    <lineage>
        <taxon>Bacteria</taxon>
        <taxon>Pseudomonadati</taxon>
        <taxon>Aquificota</taxon>
        <taxon>Aquificia</taxon>
        <taxon>Aquificales</taxon>
        <taxon>Aquificaceae</taxon>
        <taxon>Hydrogenobaculum</taxon>
    </lineage>
</organism>
<feature type="chain" id="PRO_1000126321" description="Probable transaldolase">
    <location>
        <begin position="1"/>
        <end position="217"/>
    </location>
</feature>
<feature type="active site" description="Schiff-base intermediate with substrate" evidence="1">
    <location>
        <position position="83"/>
    </location>
</feature>
<dbReference type="EC" id="2.2.1.2" evidence="1"/>
<dbReference type="EMBL" id="CP001130">
    <property type="protein sequence ID" value="ACG57502.1"/>
    <property type="molecule type" value="Genomic_DNA"/>
</dbReference>
<dbReference type="RefSeq" id="WP_012513858.1">
    <property type="nucleotide sequence ID" value="NC_011126.1"/>
</dbReference>
<dbReference type="SMR" id="B4U8P1"/>
<dbReference type="STRING" id="380749.HY04AAS1_0815"/>
<dbReference type="KEGG" id="hya:HY04AAS1_0815"/>
<dbReference type="eggNOG" id="COG0176">
    <property type="taxonomic scope" value="Bacteria"/>
</dbReference>
<dbReference type="HOGENOM" id="CLU_079764_0_0_0"/>
<dbReference type="OrthoDB" id="9807051at2"/>
<dbReference type="UniPathway" id="UPA00115">
    <property type="reaction ID" value="UER00414"/>
</dbReference>
<dbReference type="GO" id="GO:0005737">
    <property type="term" value="C:cytoplasm"/>
    <property type="evidence" value="ECO:0007669"/>
    <property type="project" value="UniProtKB-SubCell"/>
</dbReference>
<dbReference type="GO" id="GO:0016832">
    <property type="term" value="F:aldehyde-lyase activity"/>
    <property type="evidence" value="ECO:0007669"/>
    <property type="project" value="InterPro"/>
</dbReference>
<dbReference type="GO" id="GO:0004801">
    <property type="term" value="F:transaldolase activity"/>
    <property type="evidence" value="ECO:0007669"/>
    <property type="project" value="UniProtKB-UniRule"/>
</dbReference>
<dbReference type="GO" id="GO:0005975">
    <property type="term" value="P:carbohydrate metabolic process"/>
    <property type="evidence" value="ECO:0007669"/>
    <property type="project" value="InterPro"/>
</dbReference>
<dbReference type="GO" id="GO:0006098">
    <property type="term" value="P:pentose-phosphate shunt"/>
    <property type="evidence" value="ECO:0007669"/>
    <property type="project" value="UniProtKB-UniRule"/>
</dbReference>
<dbReference type="CDD" id="cd00956">
    <property type="entry name" value="Transaldolase_FSA"/>
    <property type="match status" value="1"/>
</dbReference>
<dbReference type="FunFam" id="3.20.20.70:FF:000018">
    <property type="entry name" value="Probable transaldolase"/>
    <property type="match status" value="1"/>
</dbReference>
<dbReference type="Gene3D" id="3.20.20.70">
    <property type="entry name" value="Aldolase class I"/>
    <property type="match status" value="1"/>
</dbReference>
<dbReference type="HAMAP" id="MF_00494">
    <property type="entry name" value="Transaldolase_3b"/>
    <property type="match status" value="1"/>
</dbReference>
<dbReference type="InterPro" id="IPR013785">
    <property type="entry name" value="Aldolase_TIM"/>
</dbReference>
<dbReference type="InterPro" id="IPR001585">
    <property type="entry name" value="TAL/FSA"/>
</dbReference>
<dbReference type="InterPro" id="IPR022999">
    <property type="entry name" value="Transaldolase_3B"/>
</dbReference>
<dbReference type="InterPro" id="IPR004731">
    <property type="entry name" value="Transaldolase_3B/F6P_aldolase"/>
</dbReference>
<dbReference type="InterPro" id="IPR033919">
    <property type="entry name" value="TSA/FSA_arc/bac"/>
</dbReference>
<dbReference type="NCBIfam" id="TIGR00875">
    <property type="entry name" value="fsa_talC_mipB"/>
    <property type="match status" value="1"/>
</dbReference>
<dbReference type="PANTHER" id="PTHR10683:SF40">
    <property type="entry name" value="FRUCTOSE-6-PHOSPHATE ALDOLASE 1-RELATED"/>
    <property type="match status" value="1"/>
</dbReference>
<dbReference type="PANTHER" id="PTHR10683">
    <property type="entry name" value="TRANSALDOLASE"/>
    <property type="match status" value="1"/>
</dbReference>
<dbReference type="Pfam" id="PF00923">
    <property type="entry name" value="TAL_FSA"/>
    <property type="match status" value="1"/>
</dbReference>
<dbReference type="SUPFAM" id="SSF51569">
    <property type="entry name" value="Aldolase"/>
    <property type="match status" value="1"/>
</dbReference>
<protein>
    <recommendedName>
        <fullName evidence="1">Probable transaldolase</fullName>
        <ecNumber evidence="1">2.2.1.2</ecNumber>
    </recommendedName>
</protein>
<accession>B4U8P1</accession>
<comment type="function">
    <text evidence="1">Transaldolase is important for the balance of metabolites in the pentose-phosphate pathway.</text>
</comment>
<comment type="catalytic activity">
    <reaction evidence="1">
        <text>D-sedoheptulose 7-phosphate + D-glyceraldehyde 3-phosphate = D-erythrose 4-phosphate + beta-D-fructose 6-phosphate</text>
        <dbReference type="Rhea" id="RHEA:17053"/>
        <dbReference type="ChEBI" id="CHEBI:16897"/>
        <dbReference type="ChEBI" id="CHEBI:57483"/>
        <dbReference type="ChEBI" id="CHEBI:57634"/>
        <dbReference type="ChEBI" id="CHEBI:59776"/>
        <dbReference type="EC" id="2.2.1.2"/>
    </reaction>
</comment>
<comment type="pathway">
    <text evidence="1">Carbohydrate degradation; pentose phosphate pathway; D-glyceraldehyde 3-phosphate and beta-D-fructose 6-phosphate from D-ribose 5-phosphate and D-xylulose 5-phosphate (non-oxidative stage): step 2/3.</text>
</comment>
<comment type="subcellular location">
    <subcellularLocation>
        <location evidence="1">Cytoplasm</location>
    </subcellularLocation>
</comment>
<comment type="similarity">
    <text evidence="1">Belongs to the transaldolase family. Type 3B subfamily.</text>
</comment>
<gene>
    <name evidence="1" type="primary">tal</name>
    <name type="ordered locus">HY04AAS1_0815</name>
</gene>
<proteinExistence type="inferred from homology"/>
<evidence type="ECO:0000255" key="1">
    <source>
        <dbReference type="HAMAP-Rule" id="MF_00494"/>
    </source>
</evidence>
<sequence length="217" mass="23788">MQFFIDTANIDEIKQAIDWGILDGVTTNPTLAAKTGRPFMDVVKDILSIVDGPVSLETVSLDTEGMVKEGRFLAELGDNVVVKIPMTKEGMKAVNILEEEGIPTNVTLIFSPMQALIAAKAGASYVSPFIGRLDDISTDGMNLVRDIRTIFDNYGYETEIIAASIRHPIHVLEAAKAGADIATIPFNVLEALFRHPLTDIGIDKFLKDWEKVPNKPF</sequence>
<keyword id="KW-0963">Cytoplasm</keyword>
<keyword id="KW-0570">Pentose shunt</keyword>
<keyword id="KW-0704">Schiff base</keyword>
<keyword id="KW-0808">Transferase</keyword>